<reference key="1">
    <citation type="journal article" date="1997" name="Nature">
        <title>Genomic sequence of a Lyme disease spirochaete, Borrelia burgdorferi.</title>
        <authorList>
            <person name="Fraser C.M."/>
            <person name="Casjens S."/>
            <person name="Huang W.M."/>
            <person name="Sutton G.G."/>
            <person name="Clayton R.A."/>
            <person name="Lathigra R."/>
            <person name="White O."/>
            <person name="Ketchum K.A."/>
            <person name="Dodson R.J."/>
            <person name="Hickey E.K."/>
            <person name="Gwinn M.L."/>
            <person name="Dougherty B.A."/>
            <person name="Tomb J.-F."/>
            <person name="Fleischmann R.D."/>
            <person name="Richardson D.L."/>
            <person name="Peterson J.D."/>
            <person name="Kerlavage A.R."/>
            <person name="Quackenbush J."/>
            <person name="Salzberg S.L."/>
            <person name="Hanson M."/>
            <person name="van Vugt R."/>
            <person name="Palmer N."/>
            <person name="Adams M.D."/>
            <person name="Gocayne J.D."/>
            <person name="Weidman J.F."/>
            <person name="Utterback T.R."/>
            <person name="Watthey L."/>
            <person name="McDonald L.A."/>
            <person name="Artiach P."/>
            <person name="Bowman C."/>
            <person name="Garland S.A."/>
            <person name="Fujii C."/>
            <person name="Cotton M.D."/>
            <person name="Horst K."/>
            <person name="Roberts K.M."/>
            <person name="Hatch B."/>
            <person name="Smith H.O."/>
            <person name="Venter J.C."/>
        </authorList>
    </citation>
    <scope>NUCLEOTIDE SEQUENCE [LARGE SCALE GENOMIC DNA]</scope>
    <source>
        <strain>ATCC 35210 / DSM 4680 / CIP 102532 / B31</strain>
    </source>
</reference>
<protein>
    <recommendedName>
        <fullName evidence="1">NAD kinase</fullName>
        <ecNumber evidence="1">2.7.1.23</ecNumber>
    </recommendedName>
    <alternativeName>
        <fullName evidence="1">ATP-dependent NAD kinase</fullName>
    </alternativeName>
</protein>
<accession>O51291</accession>
<name>NADK_BORBU</name>
<gene>
    <name evidence="1" type="primary">nadK</name>
    <name type="ordered locus">BB_0311</name>
</gene>
<dbReference type="EC" id="2.7.1.23" evidence="1"/>
<dbReference type="EMBL" id="AE000783">
    <property type="protein sequence ID" value="AAC66699.2"/>
    <property type="molecule type" value="Genomic_DNA"/>
</dbReference>
<dbReference type="RefSeq" id="NP_212445.2">
    <property type="nucleotide sequence ID" value="NC_001318.1"/>
</dbReference>
<dbReference type="RefSeq" id="WP_010889725.1">
    <property type="nucleotide sequence ID" value="NC_001318.1"/>
</dbReference>
<dbReference type="STRING" id="224326.BB_0311"/>
<dbReference type="PaxDb" id="224326-BB_0311"/>
<dbReference type="EnsemblBacteria" id="AAC66699">
    <property type="protein sequence ID" value="AAC66699"/>
    <property type="gene ID" value="BB_0311"/>
</dbReference>
<dbReference type="KEGG" id="bbu:BB_0311"/>
<dbReference type="PATRIC" id="fig|224326.49.peg.709"/>
<dbReference type="HOGENOM" id="CLU_008831_0_0_12"/>
<dbReference type="OrthoDB" id="9774737at2"/>
<dbReference type="Proteomes" id="UP000001807">
    <property type="component" value="Chromosome"/>
</dbReference>
<dbReference type="GO" id="GO:0005737">
    <property type="term" value="C:cytoplasm"/>
    <property type="evidence" value="ECO:0007669"/>
    <property type="project" value="UniProtKB-SubCell"/>
</dbReference>
<dbReference type="GO" id="GO:0005524">
    <property type="term" value="F:ATP binding"/>
    <property type="evidence" value="ECO:0007669"/>
    <property type="project" value="UniProtKB-KW"/>
</dbReference>
<dbReference type="GO" id="GO:0046872">
    <property type="term" value="F:metal ion binding"/>
    <property type="evidence" value="ECO:0007669"/>
    <property type="project" value="UniProtKB-UniRule"/>
</dbReference>
<dbReference type="GO" id="GO:0051287">
    <property type="term" value="F:NAD binding"/>
    <property type="evidence" value="ECO:0007669"/>
    <property type="project" value="UniProtKB-ARBA"/>
</dbReference>
<dbReference type="GO" id="GO:0003951">
    <property type="term" value="F:NAD+ kinase activity"/>
    <property type="evidence" value="ECO:0007669"/>
    <property type="project" value="UniProtKB-UniRule"/>
</dbReference>
<dbReference type="GO" id="GO:0019674">
    <property type="term" value="P:NAD metabolic process"/>
    <property type="evidence" value="ECO:0007669"/>
    <property type="project" value="InterPro"/>
</dbReference>
<dbReference type="GO" id="GO:0006741">
    <property type="term" value="P:NADP biosynthetic process"/>
    <property type="evidence" value="ECO:0007669"/>
    <property type="project" value="UniProtKB-UniRule"/>
</dbReference>
<dbReference type="Gene3D" id="3.40.50.10330">
    <property type="entry name" value="Probable inorganic polyphosphate/atp-NAD kinase, domain 1"/>
    <property type="match status" value="1"/>
</dbReference>
<dbReference type="Gene3D" id="2.60.200.30">
    <property type="entry name" value="Probable inorganic polyphosphate/atp-NAD kinase, domain 2"/>
    <property type="match status" value="1"/>
</dbReference>
<dbReference type="HAMAP" id="MF_00361">
    <property type="entry name" value="NAD_kinase"/>
    <property type="match status" value="1"/>
</dbReference>
<dbReference type="InterPro" id="IPR017438">
    <property type="entry name" value="ATP-NAD_kinase_N"/>
</dbReference>
<dbReference type="InterPro" id="IPR017437">
    <property type="entry name" value="ATP-NAD_kinase_PpnK-typ_C"/>
</dbReference>
<dbReference type="InterPro" id="IPR016064">
    <property type="entry name" value="NAD/diacylglycerol_kinase_sf"/>
</dbReference>
<dbReference type="InterPro" id="IPR002504">
    <property type="entry name" value="NADK"/>
</dbReference>
<dbReference type="PANTHER" id="PTHR20275">
    <property type="entry name" value="NAD KINASE"/>
    <property type="match status" value="1"/>
</dbReference>
<dbReference type="PANTHER" id="PTHR20275:SF0">
    <property type="entry name" value="NAD KINASE"/>
    <property type="match status" value="1"/>
</dbReference>
<dbReference type="Pfam" id="PF01513">
    <property type="entry name" value="NAD_kinase"/>
    <property type="match status" value="1"/>
</dbReference>
<dbReference type="Pfam" id="PF20143">
    <property type="entry name" value="NAD_kinase_C"/>
    <property type="match status" value="1"/>
</dbReference>
<dbReference type="SUPFAM" id="SSF111331">
    <property type="entry name" value="NAD kinase/diacylglycerol kinase-like"/>
    <property type="match status" value="1"/>
</dbReference>
<evidence type="ECO:0000255" key="1">
    <source>
        <dbReference type="HAMAP-Rule" id="MF_00361"/>
    </source>
</evidence>
<keyword id="KW-0067">ATP-binding</keyword>
<keyword id="KW-0963">Cytoplasm</keyword>
<keyword id="KW-0418">Kinase</keyword>
<keyword id="KW-0520">NAD</keyword>
<keyword id="KW-0521">NADP</keyword>
<keyword id="KW-0547">Nucleotide-binding</keyword>
<keyword id="KW-1185">Reference proteome</keyword>
<keyword id="KW-0808">Transferase</keyword>
<proteinExistence type="inferred from homology"/>
<comment type="function">
    <text evidence="1">Involved in the regulation of the intracellular balance of NAD and NADP, and is a key enzyme in the biosynthesis of NADP. Catalyzes specifically the phosphorylation on 2'-hydroxyl of the adenosine moiety of NAD to yield NADP.</text>
</comment>
<comment type="catalytic activity">
    <reaction evidence="1">
        <text>NAD(+) + ATP = ADP + NADP(+) + H(+)</text>
        <dbReference type="Rhea" id="RHEA:18629"/>
        <dbReference type="ChEBI" id="CHEBI:15378"/>
        <dbReference type="ChEBI" id="CHEBI:30616"/>
        <dbReference type="ChEBI" id="CHEBI:57540"/>
        <dbReference type="ChEBI" id="CHEBI:58349"/>
        <dbReference type="ChEBI" id="CHEBI:456216"/>
        <dbReference type="EC" id="2.7.1.23"/>
    </reaction>
</comment>
<comment type="cofactor">
    <cofactor evidence="1">
        <name>a divalent metal cation</name>
        <dbReference type="ChEBI" id="CHEBI:60240"/>
    </cofactor>
</comment>
<comment type="subcellular location">
    <subcellularLocation>
        <location evidence="1">Cytoplasm</location>
    </subcellularLocation>
</comment>
<comment type="similarity">
    <text evidence="1">Belongs to the NAD kinase family.</text>
</comment>
<sequence length="279" mass="30967">MKNKVLLCINTLKSGASILGNDVKVYLETKYFVEVVLIDVGRPLFSFPKENFLFLITLGGDGTVLLAVNLLLENENIDIPIISINMGNVGFLADIKIEDFKKVIDRFFNNSLVINKKFLLHVTVSQHGKDLISKYALNDIIIRSSVLNKMIYVDLMVNSESFLSYKSDGIIVSTPTGSTGYSFSAGGPILEADLEGFXLTPISPHSVYNRSFVFSKLSKLSISFSKEYFIAAASIFLDGINFGSFGVDVVFEFKISSQSLNFVSFCTDTFVKRLKNKLL</sequence>
<feature type="chain" id="PRO_0000120602" description="NAD kinase">
    <location>
        <begin position="1"/>
        <end position="279"/>
    </location>
</feature>
<feature type="active site" description="Proton acceptor" evidence="1">
    <location>
        <position position="61"/>
    </location>
</feature>
<feature type="binding site" evidence="1">
    <location>
        <begin position="61"/>
        <end position="62"/>
    </location>
    <ligand>
        <name>NAD(+)</name>
        <dbReference type="ChEBI" id="CHEBI:57540"/>
    </ligand>
</feature>
<feature type="binding site" evidence="1">
    <location>
        <begin position="138"/>
        <end position="139"/>
    </location>
    <ligand>
        <name>NAD(+)</name>
        <dbReference type="ChEBI" id="CHEBI:57540"/>
    </ligand>
</feature>
<feature type="binding site" evidence="1">
    <location>
        <position position="149"/>
    </location>
    <ligand>
        <name>NAD(+)</name>
        <dbReference type="ChEBI" id="CHEBI:57540"/>
    </ligand>
</feature>
<feature type="binding site" evidence="1">
    <location>
        <position position="166"/>
    </location>
    <ligand>
        <name>NAD(+)</name>
        <dbReference type="ChEBI" id="CHEBI:57540"/>
    </ligand>
</feature>
<feature type="binding site" evidence="1">
    <location>
        <position position="168"/>
    </location>
    <ligand>
        <name>NAD(+)</name>
        <dbReference type="ChEBI" id="CHEBI:57540"/>
    </ligand>
</feature>
<feature type="binding site" evidence="1">
    <location>
        <begin position="179"/>
        <end position="184"/>
    </location>
    <ligand>
        <name>NAD(+)</name>
        <dbReference type="ChEBI" id="CHEBI:57540"/>
    </ligand>
</feature>
<organism>
    <name type="scientific">Borreliella burgdorferi (strain ATCC 35210 / DSM 4680 / CIP 102532 / B31)</name>
    <name type="common">Borrelia burgdorferi</name>
    <dbReference type="NCBI Taxonomy" id="224326"/>
    <lineage>
        <taxon>Bacteria</taxon>
        <taxon>Pseudomonadati</taxon>
        <taxon>Spirochaetota</taxon>
        <taxon>Spirochaetia</taxon>
        <taxon>Spirochaetales</taxon>
        <taxon>Borreliaceae</taxon>
        <taxon>Borreliella</taxon>
    </lineage>
</organism>